<evidence type="ECO:0000255" key="1">
    <source>
        <dbReference type="HAMAP-Rule" id="MF_01077"/>
    </source>
</evidence>
<keyword id="KW-0963">Cytoplasm</keyword>
<keyword id="KW-0690">Ribosome biogenesis</keyword>
<organism>
    <name type="scientific">Nitratidesulfovibrio vulgaris (strain DP4)</name>
    <name type="common">Desulfovibrio vulgaris</name>
    <dbReference type="NCBI Taxonomy" id="391774"/>
    <lineage>
        <taxon>Bacteria</taxon>
        <taxon>Pseudomonadati</taxon>
        <taxon>Thermodesulfobacteriota</taxon>
        <taxon>Desulfovibrionia</taxon>
        <taxon>Desulfovibrionales</taxon>
        <taxon>Desulfovibrionaceae</taxon>
        <taxon>Nitratidesulfovibrio</taxon>
    </lineage>
</organism>
<dbReference type="EMBL" id="CP000527">
    <property type="protein sequence ID" value="ABM29446.1"/>
    <property type="molecule type" value="Genomic_DNA"/>
</dbReference>
<dbReference type="RefSeq" id="WP_010937817.1">
    <property type="nucleotide sequence ID" value="NC_008751.1"/>
</dbReference>
<dbReference type="SMR" id="A1VG80"/>
<dbReference type="KEGG" id="dvl:Dvul_2430"/>
<dbReference type="HOGENOM" id="CLU_070525_2_2_7"/>
<dbReference type="Proteomes" id="UP000009173">
    <property type="component" value="Chromosome"/>
</dbReference>
<dbReference type="GO" id="GO:0005829">
    <property type="term" value="C:cytosol"/>
    <property type="evidence" value="ECO:0007669"/>
    <property type="project" value="TreeGrafter"/>
</dbReference>
<dbReference type="GO" id="GO:0000028">
    <property type="term" value="P:ribosomal small subunit assembly"/>
    <property type="evidence" value="ECO:0007669"/>
    <property type="project" value="TreeGrafter"/>
</dbReference>
<dbReference type="GO" id="GO:0006412">
    <property type="term" value="P:translation"/>
    <property type="evidence" value="ECO:0007669"/>
    <property type="project" value="TreeGrafter"/>
</dbReference>
<dbReference type="CDD" id="cd01734">
    <property type="entry name" value="YlxS_C"/>
    <property type="match status" value="1"/>
</dbReference>
<dbReference type="FunFam" id="3.30.300.70:FF:000001">
    <property type="entry name" value="Ribosome maturation factor RimP"/>
    <property type="match status" value="1"/>
</dbReference>
<dbReference type="Gene3D" id="3.30.300.70">
    <property type="entry name" value="RimP-like superfamily, N-terminal"/>
    <property type="match status" value="1"/>
</dbReference>
<dbReference type="HAMAP" id="MF_01077">
    <property type="entry name" value="RimP"/>
    <property type="match status" value="1"/>
</dbReference>
<dbReference type="InterPro" id="IPR003728">
    <property type="entry name" value="Ribosome_maturation_RimP"/>
</dbReference>
<dbReference type="InterPro" id="IPR028998">
    <property type="entry name" value="RimP_C"/>
</dbReference>
<dbReference type="InterPro" id="IPR036847">
    <property type="entry name" value="RimP_C_sf"/>
</dbReference>
<dbReference type="InterPro" id="IPR028989">
    <property type="entry name" value="RimP_N"/>
</dbReference>
<dbReference type="InterPro" id="IPR035956">
    <property type="entry name" value="RimP_N_sf"/>
</dbReference>
<dbReference type="NCBIfam" id="NF011225">
    <property type="entry name" value="PRK14632.1"/>
    <property type="match status" value="1"/>
</dbReference>
<dbReference type="PANTHER" id="PTHR33867">
    <property type="entry name" value="RIBOSOME MATURATION FACTOR RIMP"/>
    <property type="match status" value="1"/>
</dbReference>
<dbReference type="PANTHER" id="PTHR33867:SF1">
    <property type="entry name" value="RIBOSOME MATURATION FACTOR RIMP"/>
    <property type="match status" value="1"/>
</dbReference>
<dbReference type="Pfam" id="PF02576">
    <property type="entry name" value="RimP_N"/>
    <property type="match status" value="1"/>
</dbReference>
<dbReference type="SUPFAM" id="SSF74942">
    <property type="entry name" value="YhbC-like, C-terminal domain"/>
    <property type="match status" value="1"/>
</dbReference>
<dbReference type="SUPFAM" id="SSF75420">
    <property type="entry name" value="YhbC-like, N-terminal domain"/>
    <property type="match status" value="1"/>
</dbReference>
<name>RIMP_NITV4</name>
<accession>A1VG80</accession>
<proteinExistence type="inferred from homology"/>
<sequence>MTKQALDATIADMAGPFLASLGLELWGIELSYGGRTVVRLFVDGPEGVTIDQCAEVSRHVGLALEVEDVISSAYVLEVSSPGLERPFFRAEQMSPYVGRQIELTLIDPTPEWPGRRKFRGELLAVEGDTVVLRPEGAPAPEAEEAVLRTSWQGVRKANLIHVFPEPGHKPRR</sequence>
<reference key="1">
    <citation type="journal article" date="2009" name="Environ. Microbiol.">
        <title>Contribution of mobile genetic elements to Desulfovibrio vulgaris genome plasticity.</title>
        <authorList>
            <person name="Walker C.B."/>
            <person name="Stolyar S."/>
            <person name="Chivian D."/>
            <person name="Pinel N."/>
            <person name="Gabster J.A."/>
            <person name="Dehal P.S."/>
            <person name="He Z."/>
            <person name="Yang Z.K."/>
            <person name="Yen H.C."/>
            <person name="Zhou J."/>
            <person name="Wall J.D."/>
            <person name="Hazen T.C."/>
            <person name="Arkin A.P."/>
            <person name="Stahl D.A."/>
        </authorList>
    </citation>
    <scope>NUCLEOTIDE SEQUENCE [LARGE SCALE GENOMIC DNA]</scope>
    <source>
        <strain>DP4</strain>
    </source>
</reference>
<feature type="chain" id="PRO_1000064709" description="Ribosome maturation factor RimP">
    <location>
        <begin position="1"/>
        <end position="172"/>
    </location>
</feature>
<comment type="function">
    <text evidence="1">Required for maturation of 30S ribosomal subunits.</text>
</comment>
<comment type="subcellular location">
    <subcellularLocation>
        <location evidence="1">Cytoplasm</location>
    </subcellularLocation>
</comment>
<comment type="similarity">
    <text evidence="1">Belongs to the RimP family.</text>
</comment>
<protein>
    <recommendedName>
        <fullName evidence="1">Ribosome maturation factor RimP</fullName>
    </recommendedName>
</protein>
<gene>
    <name evidence="1" type="primary">rimP</name>
    <name type="ordered locus">Dvul_2430</name>
</gene>